<name>IFP1_CAEEL</name>
<sequence length="776" mass="89051">MDSANARDCLLHLARAKLSERQDLVQLNDQFVDIIEHVHYMEAEHTALEHDYNLLKSGVQSDSSGINEIYNVEIRTVRSGIEEINRSRHELLNEQTQLSHQVKEAEQLWRHTAKSALGVPKEVDDEFHRICHIKMEDCITKRRIKYMEDKLRLIKQNNGRIFEHINLMRMRKDQAVSLQQEYLLRKNELLHSIRNMEEDNKKIIMNEHKYFVRDRNADRHVFRDQLRKAIADIRADYEANRLRNEEEIRIRLEREIHRMNTTMPGVVCYDKLREELSIVKNNLSGLQKQVSEVEIRNNSLTQQIEFYRLEISENNKLFEDTLEFKIKEIEKMREQCTAISVELEKLCDLNIDLQKEIAKYRELLDRSGDPRANAPSTQVIASALSRQNYSSISDHHSRTSSGIVQHTAHHAVRDSSSSRTGTTIHETITHTPIPIPATLPVQPIREYTYSRDASPIRPSYTPYQQESRADSRSSLRERIQIETLQGTLPVLPSHSVETIRASDNTRLVRDLSAGGQINTTQINNPYASRTPTSSVNDRIASERRDSEIRRNDALHQPYPIGGAVPRVEPTIFNERAPGYTHINSNFPLITPVTEGATVPSYYDTFNRNSSQRGPHHSSYHAATGSVSNSISTTLLNEGSIEHSSSSDSVDEDNFQRFTRWYKGRVKISDVTADFVQLVNRSSKKSADVGGFKLIHEFGNKSVYVDLPVGLILAPKDSLKIYARGATHERGAVIAEIDFFDTTIHTNTSIRNTNNEVKSWFVYTSNTEIGDADHHHH</sequence>
<proteinExistence type="inferred from homology"/>
<gene>
    <name type="primary">ifp-1</name>
    <name type="ORF">C43C3.1</name>
</gene>
<accession>Q09501</accession>
<comment type="function">
    <text evidence="4">Cytoplasmic intermediate filaments provide mechanical strength to cells. Not essential protein.</text>
</comment>
<comment type="subcellular location">
    <subcellularLocation>
        <location evidence="5">Cytoplasm</location>
    </subcellularLocation>
</comment>
<comment type="similarity">
    <text evidence="2">Belongs to the intermediate filament family.</text>
</comment>
<reference key="1">
    <citation type="journal article" date="1998" name="Science">
        <title>Genome sequence of the nematode C. elegans: a platform for investigating biology.</title>
        <authorList>
            <consortium name="The C. elegans sequencing consortium"/>
        </authorList>
    </citation>
    <scope>NUCLEOTIDE SEQUENCE [LARGE SCALE GENOMIC DNA]</scope>
    <source>
        <strain>Bristol N2</strain>
    </source>
</reference>
<reference key="2">
    <citation type="journal article" date="2001" name="Proc. Natl. Acad. Sci. U.S.A.">
        <title>Essential roles for four cytoplasmic intermediate filament proteins in Caenorhabditis elegans development.</title>
        <authorList>
            <person name="Karabinos A."/>
            <person name="Schmidt H."/>
            <person name="Harborth J."/>
            <person name="Schnabel R."/>
            <person name="Weber K."/>
        </authorList>
    </citation>
    <scope>FUNCTION</scope>
</reference>
<dbReference type="EMBL" id="Z47067">
    <property type="protein sequence ID" value="CAA87328.1"/>
    <property type="molecule type" value="Genomic_DNA"/>
</dbReference>
<dbReference type="PIR" id="T19900">
    <property type="entry name" value="T19900"/>
</dbReference>
<dbReference type="RefSeq" id="NP_509628.1">
    <property type="nucleotide sequence ID" value="NM_077227.8"/>
</dbReference>
<dbReference type="SMR" id="Q09501"/>
<dbReference type="BioGRID" id="46098">
    <property type="interactions" value="11"/>
</dbReference>
<dbReference type="DIP" id="DIP-27211N"/>
<dbReference type="FunCoup" id="Q09501">
    <property type="interactions" value="8"/>
</dbReference>
<dbReference type="IntAct" id="Q09501">
    <property type="interactions" value="3"/>
</dbReference>
<dbReference type="STRING" id="6239.C43C3.1.2"/>
<dbReference type="iPTMnet" id="Q09501"/>
<dbReference type="PaxDb" id="6239-C43C3.1"/>
<dbReference type="PeptideAtlas" id="Q09501"/>
<dbReference type="EnsemblMetazoa" id="C43C3.1.1">
    <property type="protein sequence ID" value="C43C3.1.1"/>
    <property type="gene ID" value="WBGene00002067"/>
</dbReference>
<dbReference type="GeneID" id="181182"/>
<dbReference type="KEGG" id="cel:CELE_C43C3.1"/>
<dbReference type="UCSC" id="C43C3.1">
    <property type="organism name" value="c. elegans"/>
</dbReference>
<dbReference type="AGR" id="WB:WBGene00002067"/>
<dbReference type="CTD" id="181182"/>
<dbReference type="WormBase" id="C43C3.1">
    <property type="protein sequence ID" value="CE01523"/>
    <property type="gene ID" value="WBGene00002067"/>
    <property type="gene designation" value="ifp-1"/>
</dbReference>
<dbReference type="eggNOG" id="KOG0977">
    <property type="taxonomic scope" value="Eukaryota"/>
</dbReference>
<dbReference type="GeneTree" id="ENSGT00910000144343"/>
<dbReference type="HOGENOM" id="CLU_020274_0_0_1"/>
<dbReference type="InParanoid" id="Q09501"/>
<dbReference type="OMA" id="FQRFTRW"/>
<dbReference type="OrthoDB" id="5828388at2759"/>
<dbReference type="Reactome" id="R-CEL-2559584">
    <property type="pathway name" value="Formation of Senescence-Associated Heterochromatin Foci (SAHF)"/>
</dbReference>
<dbReference type="Reactome" id="R-CEL-4419969">
    <property type="pathway name" value="Depolymerization of the Nuclear Lamina"/>
</dbReference>
<dbReference type="Reactome" id="R-CEL-9013405">
    <property type="pathway name" value="RHOD GTPase cycle"/>
</dbReference>
<dbReference type="Reactome" id="R-CEL-9035034">
    <property type="pathway name" value="RHOF GTPase cycle"/>
</dbReference>
<dbReference type="PRO" id="PR:Q09501"/>
<dbReference type="Proteomes" id="UP000001940">
    <property type="component" value="Chromosome X"/>
</dbReference>
<dbReference type="Bgee" id="WBGene00002067">
    <property type="expression patterns" value="Expressed in larva and 3 other cell types or tissues"/>
</dbReference>
<dbReference type="GO" id="GO:0005737">
    <property type="term" value="C:cytoplasm"/>
    <property type="evidence" value="ECO:0007669"/>
    <property type="project" value="UniProtKB-SubCell"/>
</dbReference>
<dbReference type="GO" id="GO:0005882">
    <property type="term" value="C:intermediate filament"/>
    <property type="evidence" value="ECO:0007669"/>
    <property type="project" value="UniProtKB-KW"/>
</dbReference>
<dbReference type="GO" id="GO:0005635">
    <property type="term" value="C:nuclear envelope"/>
    <property type="evidence" value="ECO:0000318"/>
    <property type="project" value="GO_Central"/>
</dbReference>
<dbReference type="GO" id="GO:0005652">
    <property type="term" value="C:nuclear lamina"/>
    <property type="evidence" value="ECO:0000318"/>
    <property type="project" value="GO_Central"/>
</dbReference>
<dbReference type="GO" id="GO:0005200">
    <property type="term" value="F:structural constituent of cytoskeleton"/>
    <property type="evidence" value="ECO:0000318"/>
    <property type="project" value="GO_Central"/>
</dbReference>
<dbReference type="GO" id="GO:0031507">
    <property type="term" value="P:heterochromatin formation"/>
    <property type="evidence" value="ECO:0000318"/>
    <property type="project" value="GO_Central"/>
</dbReference>
<dbReference type="GO" id="GO:0006998">
    <property type="term" value="P:nuclear envelope organization"/>
    <property type="evidence" value="ECO:0000318"/>
    <property type="project" value="GO_Central"/>
</dbReference>
<dbReference type="GO" id="GO:0007097">
    <property type="term" value="P:nuclear migration"/>
    <property type="evidence" value="ECO:0000318"/>
    <property type="project" value="GO_Central"/>
</dbReference>
<dbReference type="GO" id="GO:0051664">
    <property type="term" value="P:nuclear pore localization"/>
    <property type="evidence" value="ECO:0000318"/>
    <property type="project" value="GO_Central"/>
</dbReference>
<dbReference type="GO" id="GO:0090435">
    <property type="term" value="P:protein localization to nuclear envelope"/>
    <property type="evidence" value="ECO:0000318"/>
    <property type="project" value="GO_Central"/>
</dbReference>
<dbReference type="Gene3D" id="1.20.5.170">
    <property type="match status" value="1"/>
</dbReference>
<dbReference type="Gene3D" id="2.60.40.1260">
    <property type="entry name" value="Lamin Tail domain"/>
    <property type="match status" value="1"/>
</dbReference>
<dbReference type="InterPro" id="IPR039008">
    <property type="entry name" value="IF_rod_dom"/>
</dbReference>
<dbReference type="InterPro" id="IPR001322">
    <property type="entry name" value="Lamin_tail_dom"/>
</dbReference>
<dbReference type="InterPro" id="IPR036415">
    <property type="entry name" value="Lamin_tail_dom_sf"/>
</dbReference>
<dbReference type="PANTHER" id="PTHR45721:SF15">
    <property type="entry name" value="INTERMEDIATE FILAMENT PROTEIN IFP-1"/>
    <property type="match status" value="1"/>
</dbReference>
<dbReference type="PANTHER" id="PTHR45721">
    <property type="entry name" value="LAMIN DM0-RELATED"/>
    <property type="match status" value="1"/>
</dbReference>
<dbReference type="Pfam" id="PF00038">
    <property type="entry name" value="Filament"/>
    <property type="match status" value="1"/>
</dbReference>
<dbReference type="SUPFAM" id="SSF74853">
    <property type="entry name" value="Lamin A/C globular tail domain"/>
    <property type="match status" value="1"/>
</dbReference>
<dbReference type="PROSITE" id="PS51842">
    <property type="entry name" value="IF_ROD_2"/>
    <property type="match status" value="1"/>
</dbReference>
<dbReference type="PROSITE" id="PS51841">
    <property type="entry name" value="LTD"/>
    <property type="match status" value="1"/>
</dbReference>
<feature type="chain" id="PRO_0000063845" description="Intermediate filament protein ifp-1">
    <location>
        <begin position="1"/>
        <end position="776"/>
    </location>
</feature>
<feature type="domain" description="IF rod" evidence="2">
    <location>
        <begin position="20"/>
        <end position="371"/>
    </location>
</feature>
<feature type="domain" description="LTD" evidence="1">
    <location>
        <begin position="653"/>
        <end position="764"/>
    </location>
</feature>
<feature type="region of interest" description="Head">
    <location>
        <begin position="1"/>
        <end position="23"/>
    </location>
</feature>
<feature type="region of interest" description="Coil 1A">
    <location>
        <begin position="24"/>
        <end position="55"/>
    </location>
</feature>
<feature type="region of interest" description="Linker 1">
    <location>
        <begin position="56"/>
        <end position="69"/>
    </location>
</feature>
<feature type="region of interest" description="Coil 1B">
    <location>
        <begin position="70"/>
        <end position="207"/>
    </location>
</feature>
<feature type="region of interest" description="Linker 12">
    <location>
        <begin position="208"/>
        <end position="224"/>
    </location>
</feature>
<feature type="region of interest" description="Coil 2">
    <location>
        <begin position="225"/>
        <end position="620"/>
    </location>
</feature>
<feature type="region of interest" description="Disordered" evidence="3">
    <location>
        <begin position="453"/>
        <end position="473"/>
    </location>
</feature>
<feature type="region of interest" description="Disordered" evidence="3">
    <location>
        <begin position="518"/>
        <end position="544"/>
    </location>
</feature>
<feature type="region of interest" description="Tail">
    <location>
        <begin position="621"/>
        <end position="768"/>
    </location>
</feature>
<feature type="compositionally biased region" description="Polar residues" evidence="3">
    <location>
        <begin position="518"/>
        <end position="536"/>
    </location>
</feature>
<protein>
    <recommendedName>
        <fullName>Intermediate filament protein ifp-1</fullName>
    </recommendedName>
    <alternativeName>
        <fullName>Cel IF E1</fullName>
    </alternativeName>
    <alternativeName>
        <fullName>Intermediate filament protein E1</fullName>
        <shortName>IF-E1</shortName>
    </alternativeName>
</protein>
<keyword id="KW-0175">Coiled coil</keyword>
<keyword id="KW-0963">Cytoplasm</keyword>
<keyword id="KW-0403">Intermediate filament</keyword>
<keyword id="KW-1185">Reference proteome</keyword>
<evidence type="ECO:0000255" key="1">
    <source>
        <dbReference type="PROSITE-ProRule" id="PRU01187"/>
    </source>
</evidence>
<evidence type="ECO:0000255" key="2">
    <source>
        <dbReference type="PROSITE-ProRule" id="PRU01188"/>
    </source>
</evidence>
<evidence type="ECO:0000256" key="3">
    <source>
        <dbReference type="SAM" id="MobiDB-lite"/>
    </source>
</evidence>
<evidence type="ECO:0000269" key="4">
    <source>
    </source>
</evidence>
<evidence type="ECO:0000305" key="5"/>
<organism>
    <name type="scientific">Caenorhabditis elegans</name>
    <dbReference type="NCBI Taxonomy" id="6239"/>
    <lineage>
        <taxon>Eukaryota</taxon>
        <taxon>Metazoa</taxon>
        <taxon>Ecdysozoa</taxon>
        <taxon>Nematoda</taxon>
        <taxon>Chromadorea</taxon>
        <taxon>Rhabditida</taxon>
        <taxon>Rhabditina</taxon>
        <taxon>Rhabditomorpha</taxon>
        <taxon>Rhabditoidea</taxon>
        <taxon>Rhabditidae</taxon>
        <taxon>Peloderinae</taxon>
        <taxon>Caenorhabditis</taxon>
    </lineage>
</organism>